<dbReference type="EMBL" id="AY204172">
    <property type="protein sequence ID" value="AAO39176.1"/>
    <property type="molecule type" value="mRNA"/>
</dbReference>
<dbReference type="EMBL" id="AY204173">
    <property type="protein sequence ID" value="AAO39177.1"/>
    <property type="molecule type" value="mRNA"/>
</dbReference>
<dbReference type="EMBL" id="AY204174">
    <property type="protein sequence ID" value="AAO39178.1"/>
    <property type="molecule type" value="mRNA"/>
</dbReference>
<dbReference type="EMBL" id="FO080867">
    <property type="protein sequence ID" value="CCD67352.1"/>
    <property type="molecule type" value="Genomic_DNA"/>
</dbReference>
<dbReference type="EMBL" id="FO080867">
    <property type="protein sequence ID" value="CCD67353.1"/>
    <property type="molecule type" value="Genomic_DNA"/>
</dbReference>
<dbReference type="PIR" id="T32890">
    <property type="entry name" value="T32890"/>
</dbReference>
<dbReference type="RefSeq" id="NP_001021042.2">
    <molecule id="O44960-1"/>
    <property type="nucleotide sequence ID" value="NM_001025871.7"/>
</dbReference>
<dbReference type="RefSeq" id="NP_001021043.2">
    <molecule id="O44960-2"/>
    <property type="nucleotide sequence ID" value="NM_001025872.7"/>
</dbReference>
<dbReference type="SMR" id="O44960"/>
<dbReference type="BioGRID" id="37361">
    <property type="interactions" value="2"/>
</dbReference>
<dbReference type="DIP" id="DIP-26511N"/>
<dbReference type="FunCoup" id="O44960">
    <property type="interactions" value="971"/>
</dbReference>
<dbReference type="IntAct" id="O44960">
    <property type="interactions" value="1"/>
</dbReference>
<dbReference type="STRING" id="6239.C45E1.1c.1"/>
<dbReference type="SwissLipids" id="SLP:000000578"/>
<dbReference type="PaxDb" id="6239-C45E1.1a"/>
<dbReference type="PeptideAtlas" id="O44960"/>
<dbReference type="EnsemblMetazoa" id="C45E1.1a.1">
    <molecule id="O44960-1"/>
    <property type="protein sequence ID" value="C45E1.1a.1"/>
    <property type="gene ID" value="WBGene00003654"/>
</dbReference>
<dbReference type="EnsemblMetazoa" id="C45E1.1a.2">
    <molecule id="O44960-1"/>
    <property type="protein sequence ID" value="C45E1.1a.2"/>
    <property type="gene ID" value="WBGene00003654"/>
</dbReference>
<dbReference type="EnsemblMetazoa" id="C45E1.1b.1">
    <molecule id="O44960-2"/>
    <property type="protein sequence ID" value="C45E1.1b.1"/>
    <property type="gene ID" value="WBGene00003654"/>
</dbReference>
<dbReference type="GeneID" id="171884"/>
<dbReference type="KEGG" id="cel:CELE_C45E1.1"/>
<dbReference type="UCSC" id="C45E1.1b">
    <molecule id="O44960-1"/>
    <property type="organism name" value="c. elegans"/>
</dbReference>
<dbReference type="AGR" id="WB:WBGene00003654"/>
<dbReference type="CTD" id="171884"/>
<dbReference type="WormBase" id="C45E1.1a">
    <molecule id="O44960-1"/>
    <property type="protein sequence ID" value="CE39696"/>
    <property type="gene ID" value="WBGene00003654"/>
    <property type="gene designation" value="nhr-64"/>
</dbReference>
<dbReference type="WormBase" id="C45E1.1b">
    <molecule id="O44960-2"/>
    <property type="protein sequence ID" value="CE39697"/>
    <property type="gene ID" value="WBGene00003654"/>
    <property type="gene designation" value="nhr-64"/>
</dbReference>
<dbReference type="eggNOG" id="KOG4215">
    <property type="taxonomic scope" value="Eukaryota"/>
</dbReference>
<dbReference type="HOGENOM" id="CLU_007368_5_2_1"/>
<dbReference type="InParanoid" id="O44960"/>
<dbReference type="OMA" id="WLTNETC"/>
<dbReference type="OrthoDB" id="5771769at2759"/>
<dbReference type="PhylomeDB" id="O44960"/>
<dbReference type="Reactome" id="R-CEL-383280">
    <property type="pathway name" value="Nuclear Receptor transcription pathway"/>
</dbReference>
<dbReference type="SignaLink" id="O44960"/>
<dbReference type="PRO" id="PR:O44960"/>
<dbReference type="Proteomes" id="UP000001940">
    <property type="component" value="Chromosome I"/>
</dbReference>
<dbReference type="Bgee" id="WBGene00003654">
    <property type="expression patterns" value="Expressed in larva and 3 other cell types or tissues"/>
</dbReference>
<dbReference type="ExpressionAtlas" id="O44960">
    <property type="expression patterns" value="baseline and differential"/>
</dbReference>
<dbReference type="GO" id="GO:0005634">
    <property type="term" value="C:nucleus"/>
    <property type="evidence" value="ECO:0007669"/>
    <property type="project" value="UniProtKB-SubCell"/>
</dbReference>
<dbReference type="GO" id="GO:0004879">
    <property type="term" value="F:nuclear receptor activity"/>
    <property type="evidence" value="ECO:0000318"/>
    <property type="project" value="GO_Central"/>
</dbReference>
<dbReference type="GO" id="GO:0003707">
    <property type="term" value="F:nuclear steroid receptor activity"/>
    <property type="evidence" value="ECO:0007669"/>
    <property type="project" value="InterPro"/>
</dbReference>
<dbReference type="GO" id="GO:0000978">
    <property type="term" value="F:RNA polymerase II cis-regulatory region sequence-specific DNA binding"/>
    <property type="evidence" value="ECO:0000318"/>
    <property type="project" value="GO_Central"/>
</dbReference>
<dbReference type="GO" id="GO:0008270">
    <property type="term" value="F:zinc ion binding"/>
    <property type="evidence" value="ECO:0007669"/>
    <property type="project" value="UniProtKB-KW"/>
</dbReference>
<dbReference type="GO" id="GO:0030154">
    <property type="term" value="P:cell differentiation"/>
    <property type="evidence" value="ECO:0000318"/>
    <property type="project" value="GO_Central"/>
</dbReference>
<dbReference type="GO" id="GO:0006357">
    <property type="term" value="P:regulation of transcription by RNA polymerase II"/>
    <property type="evidence" value="ECO:0000318"/>
    <property type="project" value="GO_Central"/>
</dbReference>
<dbReference type="CDD" id="cd06960">
    <property type="entry name" value="NR_DBD_HNF4A"/>
    <property type="match status" value="1"/>
</dbReference>
<dbReference type="FunFam" id="1.10.565.10:FF:000026">
    <property type="entry name" value="Hepatocyte nuclear factor 4"/>
    <property type="match status" value="1"/>
</dbReference>
<dbReference type="FunFam" id="3.30.50.10:FF:000030">
    <property type="entry name" value="Nuclear Hormone Receptor family"/>
    <property type="match status" value="1"/>
</dbReference>
<dbReference type="Gene3D" id="3.30.50.10">
    <property type="entry name" value="Erythroid Transcription Factor GATA-1, subunit A"/>
    <property type="match status" value="1"/>
</dbReference>
<dbReference type="Gene3D" id="1.10.565.10">
    <property type="entry name" value="Retinoid X Receptor"/>
    <property type="match status" value="1"/>
</dbReference>
<dbReference type="InterPro" id="IPR049636">
    <property type="entry name" value="HNF4-like_DBD"/>
</dbReference>
<dbReference type="InterPro" id="IPR035500">
    <property type="entry name" value="NHR-like_dom_sf"/>
</dbReference>
<dbReference type="InterPro" id="IPR000536">
    <property type="entry name" value="Nucl_hrmn_rcpt_lig-bd"/>
</dbReference>
<dbReference type="InterPro" id="IPR050274">
    <property type="entry name" value="Nuclear_hormone_rcpt_NR2"/>
</dbReference>
<dbReference type="InterPro" id="IPR001723">
    <property type="entry name" value="Nuclear_hrmn_rcpt"/>
</dbReference>
<dbReference type="InterPro" id="IPR000003">
    <property type="entry name" value="Retinoid-X_rcpt/HNF4"/>
</dbReference>
<dbReference type="InterPro" id="IPR001628">
    <property type="entry name" value="Znf_hrmn_rcpt"/>
</dbReference>
<dbReference type="InterPro" id="IPR013088">
    <property type="entry name" value="Znf_NHR/GATA"/>
</dbReference>
<dbReference type="PANTHER" id="PTHR24083">
    <property type="entry name" value="NUCLEAR HORMONE RECEPTOR"/>
    <property type="match status" value="1"/>
</dbReference>
<dbReference type="Pfam" id="PF00104">
    <property type="entry name" value="Hormone_recep"/>
    <property type="match status" value="1"/>
</dbReference>
<dbReference type="Pfam" id="PF00105">
    <property type="entry name" value="zf-C4"/>
    <property type="match status" value="1"/>
</dbReference>
<dbReference type="PRINTS" id="PR00545">
    <property type="entry name" value="RETINOIDXR"/>
</dbReference>
<dbReference type="PRINTS" id="PR00398">
    <property type="entry name" value="STRDHORMONER"/>
</dbReference>
<dbReference type="PRINTS" id="PR00047">
    <property type="entry name" value="STROIDFINGER"/>
</dbReference>
<dbReference type="SMART" id="SM00430">
    <property type="entry name" value="HOLI"/>
    <property type="match status" value="1"/>
</dbReference>
<dbReference type="SMART" id="SM00399">
    <property type="entry name" value="ZnF_C4"/>
    <property type="match status" value="1"/>
</dbReference>
<dbReference type="SUPFAM" id="SSF57716">
    <property type="entry name" value="Glucocorticoid receptor-like (DNA-binding domain)"/>
    <property type="match status" value="1"/>
</dbReference>
<dbReference type="SUPFAM" id="SSF48508">
    <property type="entry name" value="Nuclear receptor ligand-binding domain"/>
    <property type="match status" value="1"/>
</dbReference>
<dbReference type="PROSITE" id="PS51843">
    <property type="entry name" value="NR_LBD"/>
    <property type="match status" value="1"/>
</dbReference>
<dbReference type="PROSITE" id="PS00031">
    <property type="entry name" value="NUCLEAR_REC_DBD_1"/>
    <property type="match status" value="1"/>
</dbReference>
<dbReference type="PROSITE" id="PS51030">
    <property type="entry name" value="NUCLEAR_REC_DBD_2"/>
    <property type="match status" value="1"/>
</dbReference>
<feature type="chain" id="PRO_0000053792" description="Nuclear hormone receptor family member nhr-64">
    <location>
        <begin position="1"/>
        <end position="369"/>
    </location>
</feature>
<feature type="domain" description="NR LBD" evidence="2">
    <location>
        <begin position="120"/>
        <end position="352"/>
    </location>
</feature>
<feature type="DNA-binding region" description="Nuclear receptor" evidence="1">
    <location>
        <begin position="67"/>
        <end position="142"/>
    </location>
</feature>
<feature type="zinc finger region" description="NR C4-type" evidence="1">
    <location>
        <begin position="70"/>
        <end position="90"/>
    </location>
</feature>
<feature type="zinc finger region" description="NR C4-type" evidence="1">
    <location>
        <begin position="106"/>
        <end position="130"/>
    </location>
</feature>
<feature type="splice variant" id="VSP_015669" description="In isoform b." evidence="3">
    <location>
        <begin position="49"/>
        <end position="73"/>
    </location>
</feature>
<gene>
    <name type="primary">nhr-64</name>
    <name type="ORF">C45E1.1</name>
</gene>
<name>NHR64_CAEEL</name>
<keyword id="KW-0025">Alternative splicing</keyword>
<keyword id="KW-0238">DNA-binding</keyword>
<keyword id="KW-0479">Metal-binding</keyword>
<keyword id="KW-0539">Nucleus</keyword>
<keyword id="KW-0675">Receptor</keyword>
<keyword id="KW-1185">Reference proteome</keyword>
<keyword id="KW-0804">Transcription</keyword>
<keyword id="KW-0805">Transcription regulation</keyword>
<keyword id="KW-0862">Zinc</keyword>
<keyword id="KW-0863">Zinc-finger</keyword>
<accession>O44960</accession>
<accession>D4YW56</accession>
<accession>D4YW57</accession>
<accession>Q688B5</accession>
<accession>Q86PK4</accession>
<accession>Q86PK5</accession>
<accession>Q86PK6</accession>
<proteinExistence type="evidence at transcript level"/>
<protein>
    <recommendedName>
        <fullName>Nuclear hormone receptor family member nhr-64</fullName>
    </recommendedName>
</protein>
<sequence>MTLEEKEEVSTSTSQSPQSSSFENVFCAICGDRATGKHYGAMSCDGCKGFFRRTIRKRHSYVCRFGEKCQVDKAKRNSCRKCRFDVCLRKGMRRDAVQTERDRIRPANPLSNGSNGGIVPDDPLLDTLIRAEASTRGLRTTVITKTAEARKQATTNDVTDSMNQQLTLMVEWAKVLEGFQRVDNITQVALLRHFSAQHLVMCAAFRSIHLSDAVWLTNETCLHKDSPKIPDMNRVAERIIDQVTNPMRSLHMNEIEYIALKAIAFFDPLAKGITSESYSDVEEMRQRILESFERHVRYVSPYKDMPLRFANLLLLLPPMLAISRDLVEDVQLAKLFGLASIDNLMLELMLPNEGKNTTDKTSPPIMCHQ</sequence>
<evidence type="ECO:0000255" key="1">
    <source>
        <dbReference type="PROSITE-ProRule" id="PRU00407"/>
    </source>
</evidence>
<evidence type="ECO:0000255" key="2">
    <source>
        <dbReference type="PROSITE-ProRule" id="PRU01189"/>
    </source>
</evidence>
<evidence type="ECO:0000303" key="3">
    <source>
    </source>
</evidence>
<evidence type="ECO:0000305" key="4"/>
<comment type="function">
    <text>Orphan nuclear receptor.</text>
</comment>
<comment type="subcellular location">
    <subcellularLocation>
        <location evidence="1">Nucleus</location>
    </subcellularLocation>
</comment>
<comment type="alternative products">
    <event type="alternative splicing"/>
    <isoform>
        <id>O44960-1</id>
        <name>a</name>
        <sequence type="displayed"/>
    </isoform>
    <isoform>
        <id>O44960-2</id>
        <name>b</name>
        <sequence type="described" ref="VSP_015669"/>
    </isoform>
</comment>
<comment type="similarity">
    <text evidence="4">Belongs to the nuclear hormone receptor family.</text>
</comment>
<organism>
    <name type="scientific">Caenorhabditis elegans</name>
    <dbReference type="NCBI Taxonomy" id="6239"/>
    <lineage>
        <taxon>Eukaryota</taxon>
        <taxon>Metazoa</taxon>
        <taxon>Ecdysozoa</taxon>
        <taxon>Nematoda</taxon>
        <taxon>Chromadorea</taxon>
        <taxon>Rhabditida</taxon>
        <taxon>Rhabditina</taxon>
        <taxon>Rhabditomorpha</taxon>
        <taxon>Rhabditoidea</taxon>
        <taxon>Rhabditidae</taxon>
        <taxon>Peloderinae</taxon>
        <taxon>Caenorhabditis</taxon>
    </lineage>
</organism>
<reference key="1">
    <citation type="journal article" date="2005" name="J. Mol. Evol.">
        <title>Explosive lineage-specific expansion of the orphan nuclear receptor HNF4 in nematodes.</title>
        <authorList>
            <person name="Robinson-Rechavi M."/>
            <person name="Maina C.V."/>
            <person name="Gissendanner C.R."/>
            <person name="Laudet V."/>
            <person name="Sluder A."/>
        </authorList>
    </citation>
    <scope>NUCLEOTIDE SEQUENCE [MRNA] (ISOFORMS A AND B)</scope>
</reference>
<reference key="2">
    <citation type="journal article" date="1998" name="Science">
        <title>Genome sequence of the nematode C. elegans: a platform for investigating biology.</title>
        <authorList>
            <consortium name="The C. elegans sequencing consortium"/>
        </authorList>
    </citation>
    <scope>NUCLEOTIDE SEQUENCE [LARGE SCALE GENOMIC DNA]</scope>
    <source>
        <strain>Bristol N2</strain>
    </source>
</reference>